<gene>
    <name type="primary">Prap1</name>
</gene>
<keyword id="KW-0256">Endoplasmic reticulum</keyword>
<keyword id="KW-0446">Lipid-binding</keyword>
<keyword id="KW-1185">Reference proteome</keyword>
<keyword id="KW-0964">Secreted</keyword>
<keyword id="KW-0732">Signal</keyword>
<name>PRAP1_RAT</name>
<proteinExistence type="evidence at transcript level"/>
<organism>
    <name type="scientific">Rattus norvegicus</name>
    <name type="common">Rat</name>
    <dbReference type="NCBI Taxonomy" id="10116"/>
    <lineage>
        <taxon>Eukaryota</taxon>
        <taxon>Metazoa</taxon>
        <taxon>Chordata</taxon>
        <taxon>Craniata</taxon>
        <taxon>Vertebrata</taxon>
        <taxon>Euteleostomi</taxon>
        <taxon>Mammalia</taxon>
        <taxon>Eutheria</taxon>
        <taxon>Euarchontoglires</taxon>
        <taxon>Glires</taxon>
        <taxon>Rodentia</taxon>
        <taxon>Myomorpha</taxon>
        <taxon>Muroidea</taxon>
        <taxon>Muridae</taxon>
        <taxon>Murinae</taxon>
        <taxon>Rattus</taxon>
    </lineage>
</organism>
<dbReference type="EMBL" id="AF214733">
    <property type="protein sequence ID" value="AAG31029.1"/>
    <property type="molecule type" value="mRNA"/>
</dbReference>
<dbReference type="RefSeq" id="NP_113857.1">
    <property type="nucleotide sequence ID" value="NM_031669.1"/>
</dbReference>
<dbReference type="FunCoup" id="Q9ES75">
    <property type="interactions" value="133"/>
</dbReference>
<dbReference type="STRING" id="10116.ENSRNOP00000024912"/>
<dbReference type="PhosphoSitePlus" id="Q9ES75"/>
<dbReference type="PaxDb" id="10116-ENSRNOP00000024912"/>
<dbReference type="Ensembl" id="ENSRNOT00000024912.5">
    <property type="protein sequence ID" value="ENSRNOP00000024912.3"/>
    <property type="gene ID" value="ENSRNOG00000018446.5"/>
</dbReference>
<dbReference type="GeneID" id="60574"/>
<dbReference type="KEGG" id="rno:60574"/>
<dbReference type="UCSC" id="RGD:61876">
    <property type="organism name" value="rat"/>
</dbReference>
<dbReference type="AGR" id="RGD:61876"/>
<dbReference type="CTD" id="118471"/>
<dbReference type="RGD" id="61876">
    <property type="gene designation" value="Prap1"/>
</dbReference>
<dbReference type="eggNOG" id="ENOG502TDVH">
    <property type="taxonomic scope" value="Eukaryota"/>
</dbReference>
<dbReference type="GeneTree" id="ENSGT00390000012626"/>
<dbReference type="HOGENOM" id="CLU_148119_0_0_1"/>
<dbReference type="InParanoid" id="Q9ES75"/>
<dbReference type="OMA" id="WVETEDI"/>
<dbReference type="OrthoDB" id="9938040at2759"/>
<dbReference type="PhylomeDB" id="Q9ES75"/>
<dbReference type="TreeFam" id="TF337049"/>
<dbReference type="PRO" id="PR:Q9ES75"/>
<dbReference type="Proteomes" id="UP000002494">
    <property type="component" value="Chromosome 1"/>
</dbReference>
<dbReference type="Bgee" id="ENSRNOG00000018446">
    <property type="expression patterns" value="Expressed in duodenum and 14 other cell types or tissues"/>
</dbReference>
<dbReference type="GO" id="GO:0005783">
    <property type="term" value="C:endoplasmic reticulum"/>
    <property type="evidence" value="ECO:0000250"/>
    <property type="project" value="UniProtKB"/>
</dbReference>
<dbReference type="GO" id="GO:0005576">
    <property type="term" value="C:extracellular region"/>
    <property type="evidence" value="ECO:0000250"/>
    <property type="project" value="UniProtKB"/>
</dbReference>
<dbReference type="GO" id="GO:0017129">
    <property type="term" value="F:triglyceride binding"/>
    <property type="evidence" value="ECO:0000250"/>
    <property type="project" value="UniProtKB"/>
</dbReference>
<dbReference type="GO" id="GO:0071481">
    <property type="term" value="P:cellular response to X-ray"/>
    <property type="evidence" value="ECO:0000250"/>
    <property type="project" value="UniProtKB"/>
</dbReference>
<dbReference type="GO" id="GO:1902426">
    <property type="term" value="P:deactivation of mitotic spindle assembly checkpoint"/>
    <property type="evidence" value="ECO:0000250"/>
    <property type="project" value="UniProtKB"/>
</dbReference>
<dbReference type="GO" id="GO:0006974">
    <property type="term" value="P:DNA damage response"/>
    <property type="evidence" value="ECO:0000250"/>
    <property type="project" value="UniProtKB"/>
</dbReference>
<dbReference type="GO" id="GO:0030330">
    <property type="term" value="P:DNA damage response, signal transduction by p53 class mediator"/>
    <property type="evidence" value="ECO:0000250"/>
    <property type="project" value="UniProtKB"/>
</dbReference>
<dbReference type="GO" id="GO:0043066">
    <property type="term" value="P:negative regulation of apoptotic process"/>
    <property type="evidence" value="ECO:0000250"/>
    <property type="project" value="UniProtKB"/>
</dbReference>
<dbReference type="GO" id="GO:1904731">
    <property type="term" value="P:positive regulation of intestinal lipid absorption"/>
    <property type="evidence" value="ECO:0000250"/>
    <property type="project" value="UniProtKB"/>
</dbReference>
<dbReference type="GO" id="GO:2001140">
    <property type="term" value="P:positive regulation of phospholipid transport"/>
    <property type="evidence" value="ECO:0000250"/>
    <property type="project" value="UniProtKB"/>
</dbReference>
<dbReference type="GO" id="GO:1905885">
    <property type="term" value="P:positive regulation of triglyceride transport"/>
    <property type="evidence" value="ECO:0000250"/>
    <property type="project" value="UniProtKB"/>
</dbReference>
<dbReference type="InterPro" id="IPR027922">
    <property type="entry name" value="PRAP"/>
</dbReference>
<dbReference type="PANTHER" id="PTHR37861">
    <property type="entry name" value="PROLINE-RICH ACIDIC PROTEIN 1"/>
    <property type="match status" value="1"/>
</dbReference>
<dbReference type="PANTHER" id="PTHR37861:SF1">
    <property type="entry name" value="PROLINE-RICH ACIDIC PROTEIN 1"/>
    <property type="match status" value="1"/>
</dbReference>
<dbReference type="Pfam" id="PF15314">
    <property type="entry name" value="PRAP"/>
    <property type="match status" value="1"/>
</dbReference>
<sequence>MKRFLLATCLVAVLLWEAGAIPAHQVPVKTKGKHVFPEQETEKAWGTRAMEPLEKDDQLRALLPVPKQKLAATEEKHSDTMTWVETKDILSRFRNPLQGPELDLDSIYHPMSEDVQNEEVPQSRPILYRQVLHGPEEDLDHISHSLEDSGEP</sequence>
<evidence type="ECO:0000250" key="1">
    <source>
        <dbReference type="UniProtKB" id="Q80XD8"/>
    </source>
</evidence>
<evidence type="ECO:0000250" key="2">
    <source>
        <dbReference type="UniProtKB" id="Q96NZ9"/>
    </source>
</evidence>
<evidence type="ECO:0000255" key="3"/>
<evidence type="ECO:0000269" key="4">
    <source>
    </source>
</evidence>
<reference key="1">
    <citation type="journal article" date="2000" name="Biomed. Biochim. Acta">
        <title>Characterization and expression of the mouse pregnant specific uterus protein and its rat homologue in the intestine and uterus.</title>
        <authorList>
            <person name="Zhang J."/>
            <person name="Rajkumar N."/>
            <person name="Hooi S.C."/>
        </authorList>
    </citation>
    <scope>NUCLEOTIDE SEQUENCE [MRNA]</scope>
    <scope>TISSUE SPECIFICITY</scope>
    <source>
        <tissue>Intestine</tissue>
    </source>
</reference>
<feature type="signal peptide" evidence="3">
    <location>
        <begin position="1"/>
        <end position="20"/>
    </location>
</feature>
<feature type="chain" id="PRO_0000299418" description="Proline-rich acidic protein 1">
    <location>
        <begin position="21"/>
        <end position="152"/>
    </location>
</feature>
<protein>
    <recommendedName>
        <fullName>Proline-rich acidic protein 1</fullName>
    </recommendedName>
</protein>
<accession>Q9ES75</accession>
<comment type="function">
    <text evidence="1 2">Lipid-binding protein which promotes lipid absorption by facilitating MTTP-mediated lipid transfer (mainly triglycerides and phospholipids) and MTTP-mediated apoB lipoprotein assembly and secretion (By similarity). Protects the gastrointestinal epithelium from irradiation-induced apoptosis (By similarity). May play an important role in maintaining normal growth homeostasis in epithelial cells (By similarity). Involved in p53/TP53-dependent cell survival after DNA damage (By similarity).</text>
</comment>
<comment type="subunit">
    <text evidence="1 2">Interacts with MTTP (By similarity). Interacts with MAD1L1 (By similarity).</text>
</comment>
<comment type="subcellular location">
    <subcellularLocation>
        <location evidence="1">Secreted</location>
    </subcellularLocation>
    <subcellularLocation>
        <location evidence="1">Endoplasmic reticulum</location>
    </subcellularLocation>
</comment>
<comment type="tissue specificity">
    <text evidence="4">Highly expressed in the small intestine where it shows a proximal-distal graded expression.</text>
</comment>